<feature type="chain" id="PRO_0000124716" description="Membrane protein insertase YidC">
    <location>
        <begin position="1"/>
        <end position="541"/>
    </location>
</feature>
<feature type="transmembrane region" description="Helical" evidence="1">
    <location>
        <begin position="6"/>
        <end position="26"/>
    </location>
</feature>
<feature type="transmembrane region" description="Helical" evidence="1">
    <location>
        <begin position="337"/>
        <end position="357"/>
    </location>
</feature>
<feature type="transmembrane region" description="Helical" evidence="1">
    <location>
        <begin position="416"/>
        <end position="436"/>
    </location>
</feature>
<feature type="transmembrane region" description="Helical" evidence="1">
    <location>
        <begin position="454"/>
        <end position="474"/>
    </location>
</feature>
<feature type="transmembrane region" description="Helical" evidence="1">
    <location>
        <begin position="495"/>
        <end position="515"/>
    </location>
</feature>
<feature type="region of interest" description="Disordered" evidence="2">
    <location>
        <begin position="34"/>
        <end position="56"/>
    </location>
</feature>
<comment type="function">
    <text evidence="1">Required for the insertion and/or proper folding and/or complex formation of integral membrane proteins into the membrane. Involved in integration of membrane proteins that insert both dependently and independently of the Sec translocase complex, as well as at least some lipoproteins. Aids folding of multispanning membrane proteins.</text>
</comment>
<comment type="subunit">
    <text evidence="1">Interacts with the Sec translocase complex via SecD. Specifically interacts with transmembrane segments of nascent integral membrane proteins during membrane integration.</text>
</comment>
<comment type="subcellular location">
    <subcellularLocation>
        <location evidence="1">Cell inner membrane</location>
        <topology evidence="1">Multi-pass membrane protein</topology>
    </subcellularLocation>
</comment>
<comment type="similarity">
    <text evidence="1">Belongs to the OXA1/ALB3/YidC family. Type 1 subfamily.</text>
</comment>
<accession>P44973</accession>
<evidence type="ECO:0000255" key="1">
    <source>
        <dbReference type="HAMAP-Rule" id="MF_01810"/>
    </source>
</evidence>
<evidence type="ECO:0000256" key="2">
    <source>
        <dbReference type="SAM" id="MobiDB-lite"/>
    </source>
</evidence>
<gene>
    <name evidence="1" type="primary">yidC</name>
    <name type="ordered locus">HI_1001</name>
</gene>
<proteinExistence type="inferred from homology"/>
<sequence length="541" mass="61240">MDSRRSLLVLALIFISFLVYQQWQLDKNPPVQTEQTTSITATSDVPASSPSNSQAIADSQTRGRIITLENDVFRLKIDTLGGDVISSELLKYDAELDSKTPFELLKDTKEHIYIAQSGLIGKNGIDTRSGRAQYQIEGDNFKLAEGQESLSVPLLFEKDGVTYQKIFVLKRGSYDLGVDYKIDNQSGQAIEVEPYGQLKHSIVESSGNVAMPTYTGGAYSSSETNYKKYSFSDMQDNNLSIDTKAGWVAVLQHYFVSAWIPNQDVNNQLYTITDSKNNVASIGYRGSVVTIPAGSQETITSSLWTGPKLQNQMATVANNLDLTVDYGWAWFIAKPLFWLLTFIQGIVSNWGLAIICVTIVVKAILYPLTKAQYTSMAKMRILQPKMQEMRERFGDDRQRMSQEMMKLYKEEKVNPLGGCLPILLQMPIFIALYWTFLEAVELRHAPFFGWIQDLSAQDPYYILPILMGISMFLLQKMSPTPVTDPTQQKVMNFMPLVFMFFFLWFPSGLVLYWLVSNLITIAQQQLIYRGLEKKGLHSRKK</sequence>
<protein>
    <recommendedName>
        <fullName evidence="1">Membrane protein insertase YidC</fullName>
    </recommendedName>
    <alternativeName>
        <fullName evidence="1">Foldase YidC</fullName>
    </alternativeName>
    <alternativeName>
        <fullName evidence="1">Membrane integrase YidC</fullName>
    </alternativeName>
    <alternativeName>
        <fullName evidence="1">Membrane protein YidC</fullName>
    </alternativeName>
</protein>
<name>YIDC_HAEIN</name>
<reference key="1">
    <citation type="journal article" date="1995" name="Science">
        <title>Whole-genome random sequencing and assembly of Haemophilus influenzae Rd.</title>
        <authorList>
            <person name="Fleischmann R.D."/>
            <person name="Adams M.D."/>
            <person name="White O."/>
            <person name="Clayton R.A."/>
            <person name="Kirkness E.F."/>
            <person name="Kerlavage A.R."/>
            <person name="Bult C.J."/>
            <person name="Tomb J.-F."/>
            <person name="Dougherty B.A."/>
            <person name="Merrick J.M."/>
            <person name="McKenney K."/>
            <person name="Sutton G.G."/>
            <person name="FitzHugh W."/>
            <person name="Fields C.A."/>
            <person name="Gocayne J.D."/>
            <person name="Scott J.D."/>
            <person name="Shirley R."/>
            <person name="Liu L.-I."/>
            <person name="Glodek A."/>
            <person name="Kelley J.M."/>
            <person name="Weidman J.F."/>
            <person name="Phillips C.A."/>
            <person name="Spriggs T."/>
            <person name="Hedblom E."/>
            <person name="Cotton M.D."/>
            <person name="Utterback T.R."/>
            <person name="Hanna M.C."/>
            <person name="Nguyen D.T."/>
            <person name="Saudek D.M."/>
            <person name="Brandon R.C."/>
            <person name="Fine L.D."/>
            <person name="Fritchman J.L."/>
            <person name="Fuhrmann J.L."/>
            <person name="Geoghagen N.S.M."/>
            <person name="Gnehm C.L."/>
            <person name="McDonald L.A."/>
            <person name="Small K.V."/>
            <person name="Fraser C.M."/>
            <person name="Smith H.O."/>
            <person name="Venter J.C."/>
        </authorList>
    </citation>
    <scope>NUCLEOTIDE SEQUENCE [LARGE SCALE GENOMIC DNA]</scope>
    <source>
        <strain>ATCC 51907 / DSM 11121 / KW20 / Rd</strain>
    </source>
</reference>
<keyword id="KW-0997">Cell inner membrane</keyword>
<keyword id="KW-1003">Cell membrane</keyword>
<keyword id="KW-0143">Chaperone</keyword>
<keyword id="KW-0472">Membrane</keyword>
<keyword id="KW-0653">Protein transport</keyword>
<keyword id="KW-1185">Reference proteome</keyword>
<keyword id="KW-0812">Transmembrane</keyword>
<keyword id="KW-1133">Transmembrane helix</keyword>
<keyword id="KW-0813">Transport</keyword>
<organism>
    <name type="scientific">Haemophilus influenzae (strain ATCC 51907 / DSM 11121 / KW20 / Rd)</name>
    <dbReference type="NCBI Taxonomy" id="71421"/>
    <lineage>
        <taxon>Bacteria</taxon>
        <taxon>Pseudomonadati</taxon>
        <taxon>Pseudomonadota</taxon>
        <taxon>Gammaproteobacteria</taxon>
        <taxon>Pasteurellales</taxon>
        <taxon>Pasteurellaceae</taxon>
        <taxon>Haemophilus</taxon>
    </lineage>
</organism>
<dbReference type="EMBL" id="L42023">
    <property type="protein sequence ID" value="AAC22663.1"/>
    <property type="molecule type" value="Genomic_DNA"/>
</dbReference>
<dbReference type="PIR" id="H64163">
    <property type="entry name" value="H64163"/>
</dbReference>
<dbReference type="RefSeq" id="NP_439163.1">
    <property type="nucleotide sequence ID" value="NC_000907.1"/>
</dbReference>
<dbReference type="SMR" id="P44973"/>
<dbReference type="STRING" id="71421.HI_1001"/>
<dbReference type="DNASU" id="949995"/>
<dbReference type="EnsemblBacteria" id="AAC22663">
    <property type="protein sequence ID" value="AAC22663"/>
    <property type="gene ID" value="HI_1001"/>
</dbReference>
<dbReference type="KEGG" id="hin:HI_1001"/>
<dbReference type="PATRIC" id="fig|71421.8.peg.1044"/>
<dbReference type="eggNOG" id="COG0706">
    <property type="taxonomic scope" value="Bacteria"/>
</dbReference>
<dbReference type="HOGENOM" id="CLU_016535_3_0_6"/>
<dbReference type="OrthoDB" id="9780552at2"/>
<dbReference type="PhylomeDB" id="P44973"/>
<dbReference type="BioCyc" id="HINF71421:G1GJ1-1042-MONOMER"/>
<dbReference type="Proteomes" id="UP000000579">
    <property type="component" value="Chromosome"/>
</dbReference>
<dbReference type="GO" id="GO:0005886">
    <property type="term" value="C:plasma membrane"/>
    <property type="evidence" value="ECO:0000318"/>
    <property type="project" value="GO_Central"/>
</dbReference>
<dbReference type="GO" id="GO:0032977">
    <property type="term" value="F:membrane insertase activity"/>
    <property type="evidence" value="ECO:0000318"/>
    <property type="project" value="GO_Central"/>
</dbReference>
<dbReference type="GO" id="GO:0051205">
    <property type="term" value="P:protein insertion into membrane"/>
    <property type="evidence" value="ECO:0000318"/>
    <property type="project" value="GO_Central"/>
</dbReference>
<dbReference type="GO" id="GO:0015031">
    <property type="term" value="P:protein transport"/>
    <property type="evidence" value="ECO:0007669"/>
    <property type="project" value="UniProtKB-KW"/>
</dbReference>
<dbReference type="CDD" id="cd20070">
    <property type="entry name" value="5TM_YidC_Alb3"/>
    <property type="match status" value="1"/>
</dbReference>
<dbReference type="CDD" id="cd19961">
    <property type="entry name" value="EcYidC-like_peri"/>
    <property type="match status" value="1"/>
</dbReference>
<dbReference type="FunFam" id="2.70.98.90:FF:000001">
    <property type="entry name" value="Membrane protein insertase YidC"/>
    <property type="match status" value="1"/>
</dbReference>
<dbReference type="Gene3D" id="2.70.98.90">
    <property type="match status" value="1"/>
</dbReference>
<dbReference type="HAMAP" id="MF_01810">
    <property type="entry name" value="YidC_type1"/>
    <property type="match status" value="1"/>
</dbReference>
<dbReference type="InterPro" id="IPR019998">
    <property type="entry name" value="Membr_insert_YidC"/>
</dbReference>
<dbReference type="InterPro" id="IPR028053">
    <property type="entry name" value="Membr_insert_YidC_N"/>
</dbReference>
<dbReference type="InterPro" id="IPR001708">
    <property type="entry name" value="YidC/ALB3/OXA1/COX18"/>
</dbReference>
<dbReference type="InterPro" id="IPR028055">
    <property type="entry name" value="YidC/Oxa/ALB_C"/>
</dbReference>
<dbReference type="InterPro" id="IPR047196">
    <property type="entry name" value="YidC_ALB_C"/>
</dbReference>
<dbReference type="InterPro" id="IPR038221">
    <property type="entry name" value="YidC_periplasmic_sf"/>
</dbReference>
<dbReference type="NCBIfam" id="NF002351">
    <property type="entry name" value="PRK01318.1-1"/>
    <property type="match status" value="1"/>
</dbReference>
<dbReference type="NCBIfam" id="NF002352">
    <property type="entry name" value="PRK01318.1-3"/>
    <property type="match status" value="1"/>
</dbReference>
<dbReference type="NCBIfam" id="NF002353">
    <property type="entry name" value="PRK01318.1-4"/>
    <property type="match status" value="1"/>
</dbReference>
<dbReference type="NCBIfam" id="TIGR03593">
    <property type="entry name" value="yidC_nterm"/>
    <property type="match status" value="1"/>
</dbReference>
<dbReference type="NCBIfam" id="TIGR03592">
    <property type="entry name" value="yidC_oxa1_cterm"/>
    <property type="match status" value="1"/>
</dbReference>
<dbReference type="PANTHER" id="PTHR12428:SF65">
    <property type="entry name" value="CYTOCHROME C OXIDASE ASSEMBLY PROTEIN COX18, MITOCHONDRIAL"/>
    <property type="match status" value="1"/>
</dbReference>
<dbReference type="PANTHER" id="PTHR12428">
    <property type="entry name" value="OXA1"/>
    <property type="match status" value="1"/>
</dbReference>
<dbReference type="Pfam" id="PF02096">
    <property type="entry name" value="60KD_IMP"/>
    <property type="match status" value="1"/>
</dbReference>
<dbReference type="Pfam" id="PF14849">
    <property type="entry name" value="YidC_periplas"/>
    <property type="match status" value="1"/>
</dbReference>
<dbReference type="PRINTS" id="PR00701">
    <property type="entry name" value="60KDINNERMP"/>
</dbReference>
<dbReference type="PRINTS" id="PR01900">
    <property type="entry name" value="YIDCPROTEIN"/>
</dbReference>